<gene>
    <name type="primary">eIF5A</name>
    <name type="ordered locus">Pars_1751</name>
</gene>
<name>IF5A_PYRAR</name>
<comment type="function">
    <text evidence="1">Functions by promoting the formation of the first peptide bond.</text>
</comment>
<comment type="subcellular location">
    <subcellularLocation>
        <location evidence="1">Cytoplasm</location>
    </subcellularLocation>
</comment>
<comment type="similarity">
    <text evidence="1">Belongs to the eIF-5A family.</text>
</comment>
<proteinExistence type="inferred from homology"/>
<reference key="1">
    <citation type="submission" date="2007-04" db="EMBL/GenBank/DDBJ databases">
        <title>Complete sequence of Pyrobaculum arsenaticum DSM 13514.</title>
        <authorList>
            <consortium name="US DOE Joint Genome Institute"/>
            <person name="Copeland A."/>
            <person name="Lucas S."/>
            <person name="Lapidus A."/>
            <person name="Barry K."/>
            <person name="Glavina del Rio T."/>
            <person name="Dalin E."/>
            <person name="Tice H."/>
            <person name="Pitluck S."/>
            <person name="Chain P."/>
            <person name="Malfatti S."/>
            <person name="Shin M."/>
            <person name="Vergez L."/>
            <person name="Schmutz J."/>
            <person name="Larimer F."/>
            <person name="Land M."/>
            <person name="Hauser L."/>
            <person name="Kyrpides N."/>
            <person name="Mikhailova N."/>
            <person name="Cozen A.E."/>
            <person name="Fitz-Gibbon S.T."/>
            <person name="House C.H."/>
            <person name="Saltikov C."/>
            <person name="Lowe T.M."/>
            <person name="Richardson P."/>
        </authorList>
    </citation>
    <scope>NUCLEOTIDE SEQUENCE [LARGE SCALE GENOMIC DNA]</scope>
    <source>
        <strain>ATCC 700994 / DSM 13514 / JCM 11321 / PZ6</strain>
    </source>
</reference>
<accession>A4WLN5</accession>
<dbReference type="EMBL" id="CP000660">
    <property type="protein sequence ID" value="ABP51302.1"/>
    <property type="molecule type" value="Genomic_DNA"/>
</dbReference>
<dbReference type="SMR" id="A4WLN5"/>
<dbReference type="STRING" id="340102.Pars_1751"/>
<dbReference type="KEGG" id="pas:Pars_1751"/>
<dbReference type="HOGENOM" id="CLU_102600_3_0_2"/>
<dbReference type="OrthoDB" id="23689at2157"/>
<dbReference type="PhylomeDB" id="A4WLN5"/>
<dbReference type="Proteomes" id="UP000001567">
    <property type="component" value="Chromosome"/>
</dbReference>
<dbReference type="GO" id="GO:0005737">
    <property type="term" value="C:cytoplasm"/>
    <property type="evidence" value="ECO:0007669"/>
    <property type="project" value="UniProtKB-SubCell"/>
</dbReference>
<dbReference type="GO" id="GO:0043022">
    <property type="term" value="F:ribosome binding"/>
    <property type="evidence" value="ECO:0007669"/>
    <property type="project" value="InterPro"/>
</dbReference>
<dbReference type="GO" id="GO:0003723">
    <property type="term" value="F:RNA binding"/>
    <property type="evidence" value="ECO:0007669"/>
    <property type="project" value="InterPro"/>
</dbReference>
<dbReference type="GO" id="GO:0003746">
    <property type="term" value="F:translation elongation factor activity"/>
    <property type="evidence" value="ECO:0007669"/>
    <property type="project" value="InterPro"/>
</dbReference>
<dbReference type="GO" id="GO:0003743">
    <property type="term" value="F:translation initiation factor activity"/>
    <property type="evidence" value="ECO:0007669"/>
    <property type="project" value="UniProtKB-UniRule"/>
</dbReference>
<dbReference type="GO" id="GO:0045901">
    <property type="term" value="P:positive regulation of translational elongation"/>
    <property type="evidence" value="ECO:0007669"/>
    <property type="project" value="InterPro"/>
</dbReference>
<dbReference type="GO" id="GO:0045905">
    <property type="term" value="P:positive regulation of translational termination"/>
    <property type="evidence" value="ECO:0007669"/>
    <property type="project" value="InterPro"/>
</dbReference>
<dbReference type="CDD" id="cd04467">
    <property type="entry name" value="S1_aIF5A"/>
    <property type="match status" value="1"/>
</dbReference>
<dbReference type="FunFam" id="2.30.30.30:FF:000038">
    <property type="entry name" value="Translation initiation factor 5A"/>
    <property type="match status" value="1"/>
</dbReference>
<dbReference type="Gene3D" id="2.30.30.30">
    <property type="match status" value="1"/>
</dbReference>
<dbReference type="Gene3D" id="2.40.50.140">
    <property type="entry name" value="Nucleic acid-binding proteins"/>
    <property type="match status" value="1"/>
</dbReference>
<dbReference type="HAMAP" id="MF_00085">
    <property type="entry name" value="eIF_5A"/>
    <property type="match status" value="1"/>
</dbReference>
<dbReference type="InterPro" id="IPR001884">
    <property type="entry name" value="IF5A-like"/>
</dbReference>
<dbReference type="InterPro" id="IPR048670">
    <property type="entry name" value="IF5A-like_N"/>
</dbReference>
<dbReference type="InterPro" id="IPR012340">
    <property type="entry name" value="NA-bd_OB-fold"/>
</dbReference>
<dbReference type="InterPro" id="IPR014722">
    <property type="entry name" value="Rib_uL2_dom2"/>
</dbReference>
<dbReference type="InterPro" id="IPR019769">
    <property type="entry name" value="Trans_elong_IF5A_hypusine_site"/>
</dbReference>
<dbReference type="InterPro" id="IPR022847">
    <property type="entry name" value="Transl_elong_IF5A_arc"/>
</dbReference>
<dbReference type="InterPro" id="IPR020189">
    <property type="entry name" value="Transl_elong_IF5A_C"/>
</dbReference>
<dbReference type="InterPro" id="IPR008991">
    <property type="entry name" value="Translation_prot_SH3-like_sf"/>
</dbReference>
<dbReference type="NCBIfam" id="TIGR00037">
    <property type="entry name" value="eIF_5A"/>
    <property type="match status" value="1"/>
</dbReference>
<dbReference type="NCBIfam" id="NF003076">
    <property type="entry name" value="PRK03999.1"/>
    <property type="match status" value="1"/>
</dbReference>
<dbReference type="PANTHER" id="PTHR11673">
    <property type="entry name" value="TRANSLATION INITIATION FACTOR 5A FAMILY MEMBER"/>
    <property type="match status" value="1"/>
</dbReference>
<dbReference type="Pfam" id="PF01287">
    <property type="entry name" value="eIF-5a"/>
    <property type="match status" value="1"/>
</dbReference>
<dbReference type="Pfam" id="PF21485">
    <property type="entry name" value="IF5A-like_N"/>
    <property type="match status" value="1"/>
</dbReference>
<dbReference type="PIRSF" id="PIRSF003025">
    <property type="entry name" value="eIF5A"/>
    <property type="match status" value="1"/>
</dbReference>
<dbReference type="SMART" id="SM01376">
    <property type="entry name" value="eIF-5a"/>
    <property type="match status" value="1"/>
</dbReference>
<dbReference type="SUPFAM" id="SSF50249">
    <property type="entry name" value="Nucleic acid-binding proteins"/>
    <property type="match status" value="1"/>
</dbReference>
<dbReference type="SUPFAM" id="SSF50104">
    <property type="entry name" value="Translation proteins SH3-like domain"/>
    <property type="match status" value="1"/>
</dbReference>
<dbReference type="PROSITE" id="PS00302">
    <property type="entry name" value="IF5A_HYPUSINE"/>
    <property type="match status" value="1"/>
</dbReference>
<protein>
    <recommendedName>
        <fullName evidence="1">Translation initiation factor 5A</fullName>
    </recommendedName>
    <alternativeName>
        <fullName evidence="1">Hypusine-containing protein</fullName>
    </alternativeName>
    <alternativeName>
        <fullName evidence="1">eIF-5A</fullName>
    </alternativeName>
</protein>
<sequence>MSTKFVEVGELKEGSYVVIDGEPCRVVEIEKSKTGKHGSAKARIVAVGMFDGGKRTLSLPVDAQIEVPIIEKFTAQILSISGDIIQLMDMRDYKTIEVPMKYVEDEAKGRLAPGSEVEVWQILDRYKIVRVK</sequence>
<evidence type="ECO:0000255" key="1">
    <source>
        <dbReference type="HAMAP-Rule" id="MF_00085"/>
    </source>
</evidence>
<organism>
    <name type="scientific">Pyrobaculum arsenaticum (strain DSM 13514 / JCM 11321 / PZ6)</name>
    <dbReference type="NCBI Taxonomy" id="340102"/>
    <lineage>
        <taxon>Archaea</taxon>
        <taxon>Thermoproteota</taxon>
        <taxon>Thermoprotei</taxon>
        <taxon>Thermoproteales</taxon>
        <taxon>Thermoproteaceae</taxon>
        <taxon>Pyrobaculum</taxon>
    </lineage>
</organism>
<feature type="chain" id="PRO_1000007916" description="Translation initiation factor 5A">
    <location>
        <begin position="1"/>
        <end position="132"/>
    </location>
</feature>
<feature type="modified residue" description="Hypusine" evidence="1">
    <location>
        <position position="36"/>
    </location>
</feature>
<keyword id="KW-0963">Cytoplasm</keyword>
<keyword id="KW-0385">Hypusine</keyword>
<keyword id="KW-0396">Initiation factor</keyword>
<keyword id="KW-0648">Protein biosynthesis</keyword>